<sequence length="420" mass="46590">MAKELQKWVVMVTAQTPTNIAVIKYWGKRDETLILPINDSISVTLDPDHLCTTTTVSVSPSFEQDRMWLNGKEISLLGGRFQSCLREIRSRACDLEDEKKGIKIKKMDWEKLRLHIASYNNFPTAAGLASSAAGLACFVFALAKLMNLNEDNGQLSAIARRGSGSACRSLYGGFVKWIMGKEENGSDSIAFQLADEKHWDDLVIVIAVVSARQKETSSTTGMQDSCKTSMLIQHRAKEVVPKRIIQMEDAIEKRDFPSFARLACADSNQFHAVCLDTSPPIFYMNDTSHKIISCVEKWNRSVGTPQVAYTFDAGPNAVLIARDRKIAALLLRRLLFHFPPTFQHCLNSYVIGDKSILQDVGVQDMKDIESLPPPPEIKDNIPAQKSNGDVSYFICTRPGRGPVLLPDSGALLNPETGLPK</sequence>
<comment type="function">
    <text evidence="1 2 4">Performs the first committed step in the biosynthesis of isoprene-containing compounds such as sterols and terpenoids (By similarity). Component of the triterpenes (e.g. ginsenosides or panaxosides) and phytosterols biosynthetic pathways (PubMed:24933610, PubMed:29378087). Promotes the accumulation of stigmasterol and beta-sitosterol (PubMed:24933610).</text>
</comment>
<comment type="catalytic activity">
    <reaction evidence="1">
        <text>(R)-5-diphosphomevalonate + ATP = isopentenyl diphosphate + ADP + phosphate + CO2</text>
        <dbReference type="Rhea" id="RHEA:23732"/>
        <dbReference type="ChEBI" id="CHEBI:16526"/>
        <dbReference type="ChEBI" id="CHEBI:30616"/>
        <dbReference type="ChEBI" id="CHEBI:43474"/>
        <dbReference type="ChEBI" id="CHEBI:57557"/>
        <dbReference type="ChEBI" id="CHEBI:128769"/>
        <dbReference type="ChEBI" id="CHEBI:456216"/>
        <dbReference type="EC" id="4.1.1.33"/>
    </reaction>
</comment>
<comment type="pathway">
    <text evidence="6">Isoprenoid biosynthesis; isopentenyl diphosphate biosynthesis via mevalonate pathway; isopentenyl diphosphate from (R)-mevalonate: step 3/3.</text>
</comment>
<comment type="subunit">
    <text evidence="1">Homodimer.</text>
</comment>
<comment type="subcellular location">
    <subcellularLocation>
        <location evidence="1">Peroxisome</location>
    </subcellularLocation>
</comment>
<comment type="similarity">
    <text evidence="6">Belongs to the diphosphomevalonate decarboxylase family.</text>
</comment>
<dbReference type="EC" id="4.1.1.33" evidence="1"/>
<dbReference type="EMBL" id="GU565096">
    <property type="protein sequence ID" value="ADI80345.1"/>
    <property type="molecule type" value="mRNA"/>
</dbReference>
<dbReference type="SMR" id="F8QQQ7"/>
<dbReference type="BRENDA" id="4.1.1.33">
    <property type="organism ID" value="7895"/>
</dbReference>
<dbReference type="UniPathway" id="UPA00057">
    <property type="reaction ID" value="UER00100"/>
</dbReference>
<dbReference type="GO" id="GO:0005829">
    <property type="term" value="C:cytosol"/>
    <property type="evidence" value="ECO:0007669"/>
    <property type="project" value="InterPro"/>
</dbReference>
<dbReference type="GO" id="GO:0005777">
    <property type="term" value="C:peroxisome"/>
    <property type="evidence" value="ECO:0007669"/>
    <property type="project" value="UniProtKB-SubCell"/>
</dbReference>
<dbReference type="GO" id="GO:0005524">
    <property type="term" value="F:ATP binding"/>
    <property type="evidence" value="ECO:0007669"/>
    <property type="project" value="UniProtKB-KW"/>
</dbReference>
<dbReference type="GO" id="GO:0004163">
    <property type="term" value="F:diphosphomevalonate decarboxylase activity"/>
    <property type="evidence" value="ECO:0007669"/>
    <property type="project" value="UniProtKB-EC"/>
</dbReference>
<dbReference type="GO" id="GO:0019287">
    <property type="term" value="P:isopentenyl diphosphate biosynthetic process, mevalonate pathway"/>
    <property type="evidence" value="ECO:0007669"/>
    <property type="project" value="UniProtKB-UniPathway"/>
</dbReference>
<dbReference type="GO" id="GO:0016135">
    <property type="term" value="P:saponin biosynthetic process"/>
    <property type="evidence" value="ECO:0000314"/>
    <property type="project" value="UniProtKB"/>
</dbReference>
<dbReference type="GO" id="GO:0016126">
    <property type="term" value="P:sterol biosynthetic process"/>
    <property type="evidence" value="ECO:0007669"/>
    <property type="project" value="UniProtKB-KW"/>
</dbReference>
<dbReference type="GO" id="GO:0016104">
    <property type="term" value="P:triterpenoid biosynthetic process"/>
    <property type="evidence" value="ECO:0000314"/>
    <property type="project" value="UniProtKB"/>
</dbReference>
<dbReference type="FunFam" id="3.30.230.10:FF:000018">
    <property type="entry name" value="Diphosphomevalonate decarboxylase"/>
    <property type="match status" value="1"/>
</dbReference>
<dbReference type="FunFam" id="3.30.70.890:FF:000005">
    <property type="entry name" value="Diphosphomevalonate decarboxylase"/>
    <property type="match status" value="1"/>
</dbReference>
<dbReference type="Gene3D" id="3.30.230.10">
    <property type="match status" value="1"/>
</dbReference>
<dbReference type="Gene3D" id="3.30.70.890">
    <property type="entry name" value="GHMP kinase, C-terminal domain"/>
    <property type="match status" value="1"/>
</dbReference>
<dbReference type="InterPro" id="IPR036554">
    <property type="entry name" value="GHMP_kinase_C_sf"/>
</dbReference>
<dbReference type="InterPro" id="IPR005935">
    <property type="entry name" value="Mev_decarb"/>
</dbReference>
<dbReference type="InterPro" id="IPR029765">
    <property type="entry name" value="Mev_diP_decarb"/>
</dbReference>
<dbReference type="InterPro" id="IPR053859">
    <property type="entry name" value="MVD-like_N"/>
</dbReference>
<dbReference type="InterPro" id="IPR041431">
    <property type="entry name" value="Mvd1_C"/>
</dbReference>
<dbReference type="InterPro" id="IPR020568">
    <property type="entry name" value="Ribosomal_Su5_D2-typ_SF"/>
</dbReference>
<dbReference type="InterPro" id="IPR014721">
    <property type="entry name" value="Ribsml_uS5_D2-typ_fold_subgr"/>
</dbReference>
<dbReference type="NCBIfam" id="TIGR01240">
    <property type="entry name" value="mevDPdecarb"/>
    <property type="match status" value="1"/>
</dbReference>
<dbReference type="PANTHER" id="PTHR10977">
    <property type="entry name" value="DIPHOSPHOMEVALONATE DECARBOXYLASE"/>
    <property type="match status" value="1"/>
</dbReference>
<dbReference type="PANTHER" id="PTHR10977:SF3">
    <property type="entry name" value="DIPHOSPHOMEVALONATE DECARBOXYLASE"/>
    <property type="match status" value="1"/>
</dbReference>
<dbReference type="Pfam" id="PF18376">
    <property type="entry name" value="MDD_C"/>
    <property type="match status" value="1"/>
</dbReference>
<dbReference type="Pfam" id="PF22700">
    <property type="entry name" value="MVD-like_N"/>
    <property type="match status" value="1"/>
</dbReference>
<dbReference type="PIRSF" id="PIRSF015950">
    <property type="entry name" value="Mev_P_decrbx"/>
    <property type="match status" value="1"/>
</dbReference>
<dbReference type="SUPFAM" id="SSF55060">
    <property type="entry name" value="GHMP Kinase, C-terminal domain"/>
    <property type="match status" value="1"/>
</dbReference>
<dbReference type="SUPFAM" id="SSF54211">
    <property type="entry name" value="Ribosomal protein S5 domain 2-like"/>
    <property type="match status" value="1"/>
</dbReference>
<name>MVD2_PANGI</name>
<gene>
    <name evidence="6" type="primary">MVD2</name>
    <name evidence="5" type="synonym">MPD</name>
    <name evidence="3" type="synonym">MVD</name>
</gene>
<reference key="1">
    <citation type="journal article" date="2014" name="ACS Synth. Biol.">
        <title>Enhanced triterpene accumulation in Panax ginseng hairy roots overexpressing mevalonate-5-pyrophosphate decarboxylase and farnesyl pyrophosphate synthase.</title>
        <authorList>
            <person name="Kim Y.-K."/>
            <person name="Kim Y.B."/>
            <person name="Uddin M.R."/>
            <person name="Lee S."/>
            <person name="Kim S.-U."/>
            <person name="Park S.U."/>
        </authorList>
    </citation>
    <scope>NUCLEOTIDE SEQUENCE [MRNA]</scope>
    <scope>FUNCTION</scope>
</reference>
<reference key="2">
    <citation type="journal article" date="2018" name="Biotechnol. Appl. Biochem.">
        <title>Advances in ginsenoside biosynthesis and metabolic regulation.</title>
        <authorList>
            <person name="Lu J."/>
            <person name="Li J."/>
            <person name="Wang S."/>
            <person name="Yao L."/>
            <person name="Liang W."/>
            <person name="Wang J."/>
            <person name="Gao W."/>
        </authorList>
    </citation>
    <scope>REVIEW</scope>
</reference>
<reference key="3">
    <citation type="journal article" date="2018" name="Molecules">
        <title>Progress on the studies of the key enzymes of ginsenoside biosynthesis.</title>
        <authorList>
            <person name="Yang J.-L."/>
            <person name="Hu Z.-F."/>
            <person name="Zhang T.-T."/>
            <person name="Gu A.-D."/>
            <person name="Gong T."/>
            <person name="Zhu P."/>
        </authorList>
    </citation>
    <scope>REVIEW</scope>
    <scope>NOMENCLATURE</scope>
</reference>
<keyword id="KW-0067">ATP-binding</keyword>
<keyword id="KW-0414">Isoprene biosynthesis</keyword>
<keyword id="KW-0444">Lipid biosynthesis</keyword>
<keyword id="KW-0443">Lipid metabolism</keyword>
<keyword id="KW-0456">Lyase</keyword>
<keyword id="KW-0547">Nucleotide-binding</keyword>
<keyword id="KW-0576">Peroxisome</keyword>
<keyword id="KW-0752">Steroid biosynthesis</keyword>
<keyword id="KW-0753">Steroid metabolism</keyword>
<keyword id="KW-0756">Sterol biosynthesis</keyword>
<keyword id="KW-1207">Sterol metabolism</keyword>
<proteinExistence type="evidence at transcript level"/>
<organism>
    <name type="scientific">Panax ginseng</name>
    <name type="common">Korean ginseng</name>
    <dbReference type="NCBI Taxonomy" id="4054"/>
    <lineage>
        <taxon>Eukaryota</taxon>
        <taxon>Viridiplantae</taxon>
        <taxon>Streptophyta</taxon>
        <taxon>Embryophyta</taxon>
        <taxon>Tracheophyta</taxon>
        <taxon>Spermatophyta</taxon>
        <taxon>Magnoliopsida</taxon>
        <taxon>eudicotyledons</taxon>
        <taxon>Gunneridae</taxon>
        <taxon>Pentapetalae</taxon>
        <taxon>asterids</taxon>
        <taxon>campanulids</taxon>
        <taxon>Apiales</taxon>
        <taxon>Araliaceae</taxon>
        <taxon>Panax</taxon>
    </lineage>
</organism>
<feature type="chain" id="PRO_0000446950" description="Diphosphomevalonate decarboxylase 2">
    <location>
        <begin position="1"/>
        <end position="420"/>
    </location>
</feature>
<feature type="short sequence motif" description="Peroxisomal targeting signal PTS2" evidence="1">
    <location>
        <begin position="42"/>
        <end position="50"/>
    </location>
</feature>
<feature type="binding site" evidence="1">
    <location>
        <begin position="25"/>
        <end position="28"/>
    </location>
    <ligand>
        <name>(R)-5-diphosphomevalonate</name>
        <dbReference type="ChEBI" id="CHEBI:57557"/>
    </ligand>
</feature>
<feature type="binding site" evidence="1">
    <location>
        <position position="80"/>
    </location>
    <ligand>
        <name>(R)-5-diphosphomevalonate</name>
        <dbReference type="ChEBI" id="CHEBI:57557"/>
    </ligand>
</feature>
<feature type="binding site" evidence="1">
    <location>
        <begin position="163"/>
        <end position="168"/>
    </location>
    <ligand>
        <name>(R)-5-diphosphomevalonate</name>
        <dbReference type="ChEBI" id="CHEBI:57557"/>
    </ligand>
</feature>
<feature type="binding site" evidence="1">
    <location>
        <position position="219"/>
    </location>
    <ligand>
        <name>(R)-5-diphosphomevalonate</name>
        <dbReference type="ChEBI" id="CHEBI:57557"/>
    </ligand>
</feature>
<evidence type="ECO:0000250" key="1">
    <source>
        <dbReference type="UniProtKB" id="O23722"/>
    </source>
</evidence>
<evidence type="ECO:0000269" key="2">
    <source>
    </source>
</evidence>
<evidence type="ECO:0000303" key="3">
    <source>
    </source>
</evidence>
<evidence type="ECO:0000303" key="4">
    <source>
    </source>
</evidence>
<evidence type="ECO:0000303" key="5">
    <source>
    </source>
</evidence>
<evidence type="ECO:0000305" key="6"/>
<protein>
    <recommendedName>
        <fullName evidence="6">Diphosphomevalonate decarboxylase 2</fullName>
        <shortName evidence="3">Mevalonate-5-pyrophosphate decarboxylase</shortName>
        <shortName evidence="3">PgMVD</shortName>
        <ecNumber evidence="1">4.1.1.33</ecNumber>
    </recommendedName>
</protein>
<accession>F8QQQ7</accession>